<evidence type="ECO:0000305" key="1"/>
<proteinExistence type="uncertain"/>
<gene>
    <name type="ordered locus">Z0387</name>
    <name type="ordered locus">ECs0347</name>
</gene>
<reference key="1">
    <citation type="journal article" date="2001" name="Nature">
        <title>Genome sequence of enterohaemorrhagic Escherichia coli O157:H7.</title>
        <authorList>
            <person name="Perna N.T."/>
            <person name="Plunkett G. III"/>
            <person name="Burland V."/>
            <person name="Mau B."/>
            <person name="Glasner J.D."/>
            <person name="Rose D.J."/>
            <person name="Mayhew G.F."/>
            <person name="Evans P.S."/>
            <person name="Gregor J."/>
            <person name="Kirkpatrick H.A."/>
            <person name="Posfai G."/>
            <person name="Hackett J."/>
            <person name="Klink S."/>
            <person name="Boutin A."/>
            <person name="Shao Y."/>
            <person name="Miller L."/>
            <person name="Grotbeck E.J."/>
            <person name="Davis N.W."/>
            <person name="Lim A."/>
            <person name="Dimalanta E.T."/>
            <person name="Potamousis K."/>
            <person name="Apodaca J."/>
            <person name="Anantharaman T.S."/>
            <person name="Lin J."/>
            <person name="Yen G."/>
            <person name="Schwartz D.C."/>
            <person name="Welch R.A."/>
            <person name="Blattner F.R."/>
        </authorList>
    </citation>
    <scope>NUCLEOTIDE SEQUENCE [LARGE SCALE GENOMIC DNA]</scope>
    <source>
        <strain>O157:H7 / EDL933 / ATCC 700927 / EHEC</strain>
    </source>
</reference>
<reference key="2">
    <citation type="journal article" date="2001" name="DNA Res.">
        <title>Complete genome sequence of enterohemorrhagic Escherichia coli O157:H7 and genomic comparison with a laboratory strain K-12.</title>
        <authorList>
            <person name="Hayashi T."/>
            <person name="Makino K."/>
            <person name="Ohnishi M."/>
            <person name="Kurokawa K."/>
            <person name="Ishii K."/>
            <person name="Yokoyama K."/>
            <person name="Han C.-G."/>
            <person name="Ohtsubo E."/>
            <person name="Nakayama K."/>
            <person name="Murata T."/>
            <person name="Tanaka M."/>
            <person name="Tobe T."/>
            <person name="Iida T."/>
            <person name="Takami H."/>
            <person name="Honda T."/>
            <person name="Sasakawa C."/>
            <person name="Ogasawara N."/>
            <person name="Yasunaga T."/>
            <person name="Kuhara S."/>
            <person name="Shiba T."/>
            <person name="Hattori M."/>
            <person name="Shinagawa H."/>
        </authorList>
    </citation>
    <scope>NUCLEOTIDE SEQUENCE [LARGE SCALE GENOMIC DNA]</scope>
    <source>
        <strain>O157:H7 / Sakai / RIMD 0509952 / EHEC</strain>
    </source>
</reference>
<accession>Q8X6E3</accession>
<accession>Q7AH99</accession>
<dbReference type="EMBL" id="AE005174">
    <property type="protein sequence ID" value="AAG54643.1"/>
    <property type="molecule type" value="Genomic_DNA"/>
</dbReference>
<dbReference type="EMBL" id="BA000007">
    <property type="protein sequence ID" value="BAB33770.1"/>
    <property type="molecule type" value="Genomic_DNA"/>
</dbReference>
<dbReference type="PIR" id="C90672">
    <property type="entry name" value="C90672"/>
</dbReference>
<dbReference type="PIR" id="G85522">
    <property type="entry name" value="G85522"/>
</dbReference>
<dbReference type="RefSeq" id="NP_308374.1">
    <property type="nucleotide sequence ID" value="NC_002695.1"/>
</dbReference>
<dbReference type="STRING" id="155864.Z0387"/>
<dbReference type="KEGG" id="ece:Z0387"/>
<dbReference type="HOGENOM" id="CLU_2751356_0_0_6"/>
<dbReference type="OMA" id="CKYPGII"/>
<dbReference type="Proteomes" id="UP000000558">
    <property type="component" value="Chromosome"/>
</dbReference>
<dbReference type="Proteomes" id="UP000002519">
    <property type="component" value="Chromosome"/>
</dbReference>
<keyword id="KW-1185">Reference proteome</keyword>
<sequence length="70" mass="7855">MDACLFHCKYPGISNARIFTEEEHNHDGTGLSQVVLNAIFNLVCLLQVYVQTSYLSQQSSIIRYTAFTGP</sequence>
<protein>
    <recommendedName>
        <fullName>Putative uncharacterized protein Z0387/ECs0347</fullName>
    </recommendedName>
</protein>
<comment type="caution">
    <text evidence="1">Product of a dubious gene prediction.</text>
</comment>
<organism>
    <name type="scientific">Escherichia coli O157:H7</name>
    <dbReference type="NCBI Taxonomy" id="83334"/>
    <lineage>
        <taxon>Bacteria</taxon>
        <taxon>Pseudomonadati</taxon>
        <taxon>Pseudomonadota</taxon>
        <taxon>Gammaproteobacteria</taxon>
        <taxon>Enterobacterales</taxon>
        <taxon>Enterobacteriaceae</taxon>
        <taxon>Escherichia</taxon>
    </lineage>
</organism>
<feature type="chain" id="PRO_0000223723" description="Putative uncharacterized protein Z0387/ECs0347">
    <location>
        <begin position="1"/>
        <end position="70"/>
    </location>
</feature>
<name>Y387_ECO57</name>